<accession>P56285</accession>
<feature type="chain" id="PRO_0000053235" description="Hemoglobin subunit gamma">
    <location>
        <begin position="1"/>
        <end position="147"/>
    </location>
</feature>
<feature type="domain" description="Globin" evidence="1">
    <location>
        <begin position="3"/>
        <end position="147"/>
    </location>
</feature>
<feature type="binding site" description="distal binding residue" evidence="1">
    <location>
        <position position="64"/>
    </location>
    <ligand>
        <name>heme b</name>
        <dbReference type="ChEBI" id="CHEBI:60344"/>
    </ligand>
    <ligandPart>
        <name>Fe</name>
        <dbReference type="ChEBI" id="CHEBI:18248"/>
    </ligandPart>
</feature>
<feature type="binding site" description="proximal binding residue" evidence="1">
    <location>
        <position position="93"/>
    </location>
    <ligand>
        <name>heme b</name>
        <dbReference type="ChEBI" id="CHEBI:60344"/>
    </ligand>
    <ligandPart>
        <name>Fe</name>
        <dbReference type="ChEBI" id="CHEBI:18248"/>
    </ligandPart>
</feature>
<protein>
    <recommendedName>
        <fullName>Hemoglobin subunit gamma</fullName>
    </recommendedName>
    <alternativeName>
        <fullName>Gamma-globin</fullName>
    </alternativeName>
    <alternativeName>
        <fullName>Hemoglobin gamma chain</fullName>
    </alternativeName>
</protein>
<comment type="function">
    <text>Gamma chains make up the fetal hemoglobin F, in combination with alpha chains.</text>
</comment>
<comment type="subunit">
    <text>Heterotetramer of two alpha chains and two gamma chains in fetal hemoglobin (Hb F).</text>
</comment>
<comment type="tissue specificity">
    <text>Red blood cells.</text>
</comment>
<comment type="similarity">
    <text evidence="1">Belongs to the globin family.</text>
</comment>
<sequence>MSNFTAEDKAAITSLWGKVNVEDAGGETLGRLLVVYPWTQRFFDSFGSLSSPSAIMGNPKVKAHGVKVLTSLGEAIKNLDDLKGTFGSLSELHCDKLHVDPENFRLPGNVLVTVLAILHGKEFTPEVQASWQKMVAGVASALASRYH</sequence>
<name>HBG_ALOSE</name>
<gene>
    <name type="primary">HBG</name>
</gene>
<evidence type="ECO:0000255" key="1">
    <source>
        <dbReference type="PROSITE-ProRule" id="PRU00238"/>
    </source>
</evidence>
<dbReference type="EMBL" id="AF030097">
    <property type="protein sequence ID" value="AAB92231.1"/>
    <property type="molecule type" value="Genomic_DNA"/>
</dbReference>
<dbReference type="SMR" id="P56285"/>
<dbReference type="GO" id="GO:0072562">
    <property type="term" value="C:blood microparticle"/>
    <property type="evidence" value="ECO:0007669"/>
    <property type="project" value="TreeGrafter"/>
</dbReference>
<dbReference type="GO" id="GO:0031838">
    <property type="term" value="C:haptoglobin-hemoglobin complex"/>
    <property type="evidence" value="ECO:0007669"/>
    <property type="project" value="TreeGrafter"/>
</dbReference>
<dbReference type="GO" id="GO:0005833">
    <property type="term" value="C:hemoglobin complex"/>
    <property type="evidence" value="ECO:0007669"/>
    <property type="project" value="InterPro"/>
</dbReference>
<dbReference type="GO" id="GO:0031720">
    <property type="term" value="F:haptoglobin binding"/>
    <property type="evidence" value="ECO:0007669"/>
    <property type="project" value="TreeGrafter"/>
</dbReference>
<dbReference type="GO" id="GO:0020037">
    <property type="term" value="F:heme binding"/>
    <property type="evidence" value="ECO:0007669"/>
    <property type="project" value="InterPro"/>
</dbReference>
<dbReference type="GO" id="GO:0031721">
    <property type="term" value="F:hemoglobin alpha binding"/>
    <property type="evidence" value="ECO:0007669"/>
    <property type="project" value="TreeGrafter"/>
</dbReference>
<dbReference type="GO" id="GO:0046872">
    <property type="term" value="F:metal ion binding"/>
    <property type="evidence" value="ECO:0007669"/>
    <property type="project" value="UniProtKB-KW"/>
</dbReference>
<dbReference type="GO" id="GO:0043177">
    <property type="term" value="F:organic acid binding"/>
    <property type="evidence" value="ECO:0007669"/>
    <property type="project" value="TreeGrafter"/>
</dbReference>
<dbReference type="GO" id="GO:0019825">
    <property type="term" value="F:oxygen binding"/>
    <property type="evidence" value="ECO:0007669"/>
    <property type="project" value="InterPro"/>
</dbReference>
<dbReference type="GO" id="GO:0005344">
    <property type="term" value="F:oxygen carrier activity"/>
    <property type="evidence" value="ECO:0007669"/>
    <property type="project" value="UniProtKB-KW"/>
</dbReference>
<dbReference type="GO" id="GO:0004601">
    <property type="term" value="F:peroxidase activity"/>
    <property type="evidence" value="ECO:0007669"/>
    <property type="project" value="TreeGrafter"/>
</dbReference>
<dbReference type="GO" id="GO:0042744">
    <property type="term" value="P:hydrogen peroxide catabolic process"/>
    <property type="evidence" value="ECO:0007669"/>
    <property type="project" value="TreeGrafter"/>
</dbReference>
<dbReference type="CDD" id="cd08925">
    <property type="entry name" value="Hb-beta-like"/>
    <property type="match status" value="1"/>
</dbReference>
<dbReference type="FunFam" id="1.10.490.10:FF:000001">
    <property type="entry name" value="Hemoglobin subunit beta"/>
    <property type="match status" value="1"/>
</dbReference>
<dbReference type="Gene3D" id="1.10.490.10">
    <property type="entry name" value="Globins"/>
    <property type="match status" value="1"/>
</dbReference>
<dbReference type="InterPro" id="IPR000971">
    <property type="entry name" value="Globin"/>
</dbReference>
<dbReference type="InterPro" id="IPR009050">
    <property type="entry name" value="Globin-like_sf"/>
</dbReference>
<dbReference type="InterPro" id="IPR012292">
    <property type="entry name" value="Globin/Proto"/>
</dbReference>
<dbReference type="InterPro" id="IPR002337">
    <property type="entry name" value="Hemoglobin_b"/>
</dbReference>
<dbReference type="InterPro" id="IPR050056">
    <property type="entry name" value="Hemoglobin_oxygen_transport"/>
</dbReference>
<dbReference type="PANTHER" id="PTHR11442">
    <property type="entry name" value="HEMOGLOBIN FAMILY MEMBER"/>
    <property type="match status" value="1"/>
</dbReference>
<dbReference type="PANTHER" id="PTHR11442:SF52">
    <property type="entry name" value="HEMOGLOBIN SUBUNIT GAMMA-1"/>
    <property type="match status" value="1"/>
</dbReference>
<dbReference type="Pfam" id="PF00042">
    <property type="entry name" value="Globin"/>
    <property type="match status" value="1"/>
</dbReference>
<dbReference type="PRINTS" id="PR00814">
    <property type="entry name" value="BETAHAEM"/>
</dbReference>
<dbReference type="SUPFAM" id="SSF46458">
    <property type="entry name" value="Globin-like"/>
    <property type="match status" value="1"/>
</dbReference>
<dbReference type="PROSITE" id="PS01033">
    <property type="entry name" value="GLOBIN"/>
    <property type="match status" value="1"/>
</dbReference>
<reference key="1">
    <citation type="journal article" date="1999" name="Mol. Phylogenet. Evol.">
        <title>Molecular phylogeny of ateline new world monkeys (Platyrrhini, atelinae) based on gamma-globin gene sequences: evidence that Brachyteles is the sister group of Lagothrix.</title>
        <authorList>
            <person name="Meireles C.M."/>
            <person name="Czelusniak J."/>
            <person name="Schneider M.P.C."/>
            <person name="Muniz J.A.P.C."/>
            <person name="Brigido M.C."/>
            <person name="Ferreira H.S."/>
            <person name="Goodman M."/>
        </authorList>
    </citation>
    <scope>NUCLEOTIDE SEQUENCE [GENOMIC DNA]</scope>
</reference>
<proteinExistence type="evidence at transcript level"/>
<organism>
    <name type="scientific">Alouatta seniculus</name>
    <name type="common">Red howler monkey</name>
    <dbReference type="NCBI Taxonomy" id="9503"/>
    <lineage>
        <taxon>Eukaryota</taxon>
        <taxon>Metazoa</taxon>
        <taxon>Chordata</taxon>
        <taxon>Craniata</taxon>
        <taxon>Vertebrata</taxon>
        <taxon>Euteleostomi</taxon>
        <taxon>Mammalia</taxon>
        <taxon>Eutheria</taxon>
        <taxon>Euarchontoglires</taxon>
        <taxon>Primates</taxon>
        <taxon>Haplorrhini</taxon>
        <taxon>Platyrrhini</taxon>
        <taxon>Atelidae</taxon>
        <taxon>Alouattinae</taxon>
        <taxon>Alouatta</taxon>
    </lineage>
</organism>
<keyword id="KW-0349">Heme</keyword>
<keyword id="KW-0408">Iron</keyword>
<keyword id="KW-0479">Metal-binding</keyword>
<keyword id="KW-0561">Oxygen transport</keyword>
<keyword id="KW-0813">Transport</keyword>